<sequence>MIASKFGIGQQVRHSLLGYLGVVVDIDPEYSLDEPSPDELAVNDELRAAPWYHVVMEDDDGQPVHTYLAEAQLRSEMRDEHPEQPSMDELARTIRKQLQAPRLRN</sequence>
<dbReference type="EMBL" id="CP001113">
    <property type="protein sequence ID" value="ACF62233.1"/>
    <property type="molecule type" value="Genomic_DNA"/>
</dbReference>
<dbReference type="RefSeq" id="WP_000561983.1">
    <property type="nucleotide sequence ID" value="NZ_CCMR01000003.1"/>
</dbReference>
<dbReference type="SMR" id="B4T208"/>
<dbReference type="GeneID" id="66755429"/>
<dbReference type="KEGG" id="see:SNSL254_A1120"/>
<dbReference type="HOGENOM" id="CLU_123865_1_0_6"/>
<dbReference type="Proteomes" id="UP000008824">
    <property type="component" value="Chromosome"/>
</dbReference>
<dbReference type="GO" id="GO:0005737">
    <property type="term" value="C:cytoplasm"/>
    <property type="evidence" value="ECO:0007669"/>
    <property type="project" value="UniProtKB-SubCell"/>
</dbReference>
<dbReference type="GO" id="GO:0003677">
    <property type="term" value="F:DNA binding"/>
    <property type="evidence" value="ECO:0007669"/>
    <property type="project" value="InterPro"/>
</dbReference>
<dbReference type="GO" id="GO:0009408">
    <property type="term" value="P:response to heat"/>
    <property type="evidence" value="ECO:0007669"/>
    <property type="project" value="UniProtKB-UniRule"/>
</dbReference>
<dbReference type="Gene3D" id="2.30.30.390">
    <property type="entry name" value="Hemimethylated DNA-binding domain"/>
    <property type="match status" value="1"/>
</dbReference>
<dbReference type="HAMAP" id="MF_01194">
    <property type="entry name" value="HspQ"/>
    <property type="match status" value="1"/>
</dbReference>
<dbReference type="InterPro" id="IPR011722">
    <property type="entry name" value="Hemimethylated_DNA-bd_dom"/>
</dbReference>
<dbReference type="InterPro" id="IPR036623">
    <property type="entry name" value="Hemimethylated_DNA-bd_sf"/>
</dbReference>
<dbReference type="InterPro" id="IPR022866">
    <property type="entry name" value="HspQ"/>
</dbReference>
<dbReference type="NCBIfam" id="NF010729">
    <property type="entry name" value="PRK14129.1"/>
    <property type="match status" value="1"/>
</dbReference>
<dbReference type="NCBIfam" id="TIGR02097">
    <property type="entry name" value="yccV"/>
    <property type="match status" value="1"/>
</dbReference>
<dbReference type="Pfam" id="PF08755">
    <property type="entry name" value="YccV-like"/>
    <property type="match status" value="1"/>
</dbReference>
<dbReference type="SMART" id="SM00992">
    <property type="entry name" value="YccV-like"/>
    <property type="match status" value="1"/>
</dbReference>
<dbReference type="SUPFAM" id="SSF141255">
    <property type="entry name" value="YccV-like"/>
    <property type="match status" value="1"/>
</dbReference>
<organism>
    <name type="scientific">Salmonella newport (strain SL254)</name>
    <dbReference type="NCBI Taxonomy" id="423368"/>
    <lineage>
        <taxon>Bacteria</taxon>
        <taxon>Pseudomonadati</taxon>
        <taxon>Pseudomonadota</taxon>
        <taxon>Gammaproteobacteria</taxon>
        <taxon>Enterobacterales</taxon>
        <taxon>Enterobacteriaceae</taxon>
        <taxon>Salmonella</taxon>
    </lineage>
</organism>
<proteinExistence type="inferred from homology"/>
<name>HSPQ_SALNS</name>
<accession>B4T208</accession>
<gene>
    <name evidence="1" type="primary">hspQ</name>
    <name type="ordered locus">SNSL254_A1120</name>
</gene>
<feature type="chain" id="PRO_1000138418" description="Heat shock protein HspQ">
    <location>
        <begin position="1"/>
        <end position="105"/>
    </location>
</feature>
<feature type="region of interest" description="Disordered" evidence="2">
    <location>
        <begin position="76"/>
        <end position="105"/>
    </location>
</feature>
<keyword id="KW-0963">Cytoplasm</keyword>
<keyword id="KW-0346">Stress response</keyword>
<reference key="1">
    <citation type="journal article" date="2011" name="J. Bacteriol.">
        <title>Comparative genomics of 28 Salmonella enterica isolates: evidence for CRISPR-mediated adaptive sublineage evolution.</title>
        <authorList>
            <person name="Fricke W.F."/>
            <person name="Mammel M.K."/>
            <person name="McDermott P.F."/>
            <person name="Tartera C."/>
            <person name="White D.G."/>
            <person name="Leclerc J.E."/>
            <person name="Ravel J."/>
            <person name="Cebula T.A."/>
        </authorList>
    </citation>
    <scope>NUCLEOTIDE SEQUENCE [LARGE SCALE GENOMIC DNA]</scope>
    <source>
        <strain>SL254</strain>
    </source>
</reference>
<comment type="function">
    <text evidence="1">Involved in the degradation of certain denaturated proteins, including DnaA, during heat shock stress.</text>
</comment>
<comment type="subcellular location">
    <subcellularLocation>
        <location evidence="1">Cytoplasm</location>
    </subcellularLocation>
</comment>
<comment type="similarity">
    <text evidence="1">Belongs to the HspQ family.</text>
</comment>
<evidence type="ECO:0000255" key="1">
    <source>
        <dbReference type="HAMAP-Rule" id="MF_01194"/>
    </source>
</evidence>
<evidence type="ECO:0000256" key="2">
    <source>
        <dbReference type="SAM" id="MobiDB-lite"/>
    </source>
</evidence>
<protein>
    <recommendedName>
        <fullName evidence="1">Heat shock protein HspQ</fullName>
    </recommendedName>
</protein>